<evidence type="ECO:0000255" key="1">
    <source>
        <dbReference type="HAMAP-Rule" id="MF_01408"/>
    </source>
</evidence>
<evidence type="ECO:0000255" key="2">
    <source>
        <dbReference type="PROSITE-ProRule" id="PRU00661"/>
    </source>
</evidence>
<evidence type="ECO:0000305" key="3"/>
<feature type="chain" id="PRO_0000175563" description="Flavin-dependent thymidylate synthase">
    <location>
        <begin position="1"/>
        <end position="298"/>
    </location>
</feature>
<feature type="domain" description="ThyX" evidence="2">
    <location>
        <begin position="41"/>
        <end position="251"/>
    </location>
</feature>
<feature type="short sequence motif" description="ThyX motif" evidence="1">
    <location>
        <begin position="110"/>
        <end position="120"/>
    </location>
</feature>
<feature type="active site" description="Involved in ionization of N3 of dUMP, leading to its activation" evidence="1">
    <location>
        <position position="217"/>
    </location>
</feature>
<feature type="binding site" evidence="1">
    <location>
        <position position="87"/>
    </location>
    <ligand>
        <name>FAD</name>
        <dbReference type="ChEBI" id="CHEBI:57692"/>
        <note>ligand shared between neighboring subunits</note>
    </ligand>
</feature>
<feature type="binding site" evidence="1">
    <location>
        <begin position="107"/>
        <end position="110"/>
    </location>
    <ligand>
        <name>dUMP</name>
        <dbReference type="ChEBI" id="CHEBI:246422"/>
        <note>ligand shared between dimeric partners</note>
    </ligand>
</feature>
<feature type="binding site" evidence="1">
    <location>
        <begin position="110"/>
        <end position="112"/>
    </location>
    <ligand>
        <name>FAD</name>
        <dbReference type="ChEBI" id="CHEBI:57692"/>
        <note>ligand shared between neighboring subunits</note>
    </ligand>
</feature>
<feature type="binding site" description="in other chain" evidence="1">
    <location>
        <begin position="118"/>
        <end position="122"/>
    </location>
    <ligand>
        <name>dUMP</name>
        <dbReference type="ChEBI" id="CHEBI:246422"/>
        <note>ligand shared between dimeric partners</note>
    </ligand>
</feature>
<feature type="binding site" evidence="1">
    <location>
        <position position="118"/>
    </location>
    <ligand>
        <name>FAD</name>
        <dbReference type="ChEBI" id="CHEBI:57692"/>
        <note>ligand shared between neighboring subunits</note>
    </ligand>
</feature>
<feature type="binding site" description="in other chain" evidence="1">
    <location>
        <position position="190"/>
    </location>
    <ligand>
        <name>dUMP</name>
        <dbReference type="ChEBI" id="CHEBI:246422"/>
        <note>ligand shared between dimeric partners</note>
    </ligand>
</feature>
<feature type="binding site" evidence="1">
    <location>
        <begin position="206"/>
        <end position="208"/>
    </location>
    <ligand>
        <name>FAD</name>
        <dbReference type="ChEBI" id="CHEBI:57692"/>
        <note>ligand shared between neighboring subunits</note>
    </ligand>
</feature>
<feature type="binding site" evidence="1">
    <location>
        <position position="212"/>
    </location>
    <ligand>
        <name>FAD</name>
        <dbReference type="ChEBI" id="CHEBI:57692"/>
        <note>ligand shared between neighboring subunits</note>
    </ligand>
</feature>
<feature type="binding site" evidence="1">
    <location>
        <position position="217"/>
    </location>
    <ligand>
        <name>dUMP</name>
        <dbReference type="ChEBI" id="CHEBI:246422"/>
        <note>ligand shared between dimeric partners</note>
    </ligand>
</feature>
<proteinExistence type="inferred from homology"/>
<gene>
    <name evidence="1" type="primary">thyX</name>
    <name type="ordered locus">Erum6790</name>
    <name type="ordered locus">ERWE_CDS_07140</name>
</gene>
<protein>
    <recommendedName>
        <fullName evidence="1">Flavin-dependent thymidylate synthase</fullName>
        <shortName evidence="1">FDTS</shortName>
        <ecNumber evidence="1">2.1.1.148</ecNumber>
    </recommendedName>
    <alternativeName>
        <fullName evidence="1">FAD-dependent thymidylate synthase</fullName>
    </alternativeName>
    <alternativeName>
        <fullName evidence="1">Thymidylate synthase ThyX</fullName>
        <shortName evidence="1">TS</shortName>
        <shortName evidence="1">TSase</shortName>
    </alternativeName>
</protein>
<comment type="function">
    <text evidence="1">Catalyzes the reductive methylation of 2'-deoxyuridine-5'-monophosphate (dUMP) to 2'-deoxythymidine-5'-monophosphate (dTMP) while utilizing 5,10-methylenetetrahydrofolate (mTHF) as the methyl donor, and NADPH and FADH(2) as the reductant.</text>
</comment>
<comment type="catalytic activity">
    <reaction evidence="1">
        <text>dUMP + (6R)-5,10-methylene-5,6,7,8-tetrahydrofolate + NADPH + H(+) = dTMP + (6S)-5,6,7,8-tetrahydrofolate + NADP(+)</text>
        <dbReference type="Rhea" id="RHEA:29043"/>
        <dbReference type="ChEBI" id="CHEBI:15378"/>
        <dbReference type="ChEBI" id="CHEBI:15636"/>
        <dbReference type="ChEBI" id="CHEBI:57453"/>
        <dbReference type="ChEBI" id="CHEBI:57783"/>
        <dbReference type="ChEBI" id="CHEBI:58349"/>
        <dbReference type="ChEBI" id="CHEBI:63528"/>
        <dbReference type="ChEBI" id="CHEBI:246422"/>
        <dbReference type="EC" id="2.1.1.148"/>
    </reaction>
</comment>
<comment type="cofactor">
    <cofactor evidence="1">
        <name>FAD</name>
        <dbReference type="ChEBI" id="CHEBI:57692"/>
    </cofactor>
    <text evidence="1">Binds 4 FAD per tetramer. Each FAD binding site is formed by three monomers.</text>
</comment>
<comment type="pathway">
    <text evidence="1">Pyrimidine metabolism; dTTP biosynthesis.</text>
</comment>
<comment type="subunit">
    <text evidence="1">Homotetramer.</text>
</comment>
<comment type="similarity">
    <text evidence="1">Belongs to the thymidylate synthase ThyX family.</text>
</comment>
<comment type="sequence caution" evidence="3">
    <conflict type="erroneous initiation">
        <sequence resource="EMBL-CDS" id="CAH58411"/>
    </conflict>
</comment>
<dbReference type="EC" id="2.1.1.148" evidence="1"/>
<dbReference type="EMBL" id="CR767821">
    <property type="protein sequence ID" value="CAH58411.1"/>
    <property type="status" value="ALT_INIT"/>
    <property type="molecule type" value="Genomic_DNA"/>
</dbReference>
<dbReference type="EMBL" id="CR925678">
    <property type="protein sequence ID" value="CAI27208.1"/>
    <property type="molecule type" value="Genomic_DNA"/>
</dbReference>
<dbReference type="RefSeq" id="WP_011155358.1">
    <property type="nucleotide sequence ID" value="NC_006832.1"/>
</dbReference>
<dbReference type="SMR" id="Q5HAK2"/>
<dbReference type="GeneID" id="33058136"/>
<dbReference type="KEGG" id="eru:Erum6790"/>
<dbReference type="KEGG" id="erw:ERWE_CDS_07140"/>
<dbReference type="eggNOG" id="COG1351">
    <property type="taxonomic scope" value="Bacteria"/>
</dbReference>
<dbReference type="HOGENOM" id="CLU_067790_0_0_5"/>
<dbReference type="UniPathway" id="UPA00575"/>
<dbReference type="Proteomes" id="UP000001021">
    <property type="component" value="Chromosome"/>
</dbReference>
<dbReference type="GO" id="GO:0050660">
    <property type="term" value="F:flavin adenine dinucleotide binding"/>
    <property type="evidence" value="ECO:0007669"/>
    <property type="project" value="InterPro"/>
</dbReference>
<dbReference type="GO" id="GO:0070402">
    <property type="term" value="F:NADPH binding"/>
    <property type="evidence" value="ECO:0007669"/>
    <property type="project" value="TreeGrafter"/>
</dbReference>
<dbReference type="GO" id="GO:0050797">
    <property type="term" value="F:thymidylate synthase (FAD) activity"/>
    <property type="evidence" value="ECO:0007669"/>
    <property type="project" value="UniProtKB-UniRule"/>
</dbReference>
<dbReference type="GO" id="GO:0004799">
    <property type="term" value="F:thymidylate synthase activity"/>
    <property type="evidence" value="ECO:0007669"/>
    <property type="project" value="TreeGrafter"/>
</dbReference>
<dbReference type="GO" id="GO:0006231">
    <property type="term" value="P:dTMP biosynthetic process"/>
    <property type="evidence" value="ECO:0007669"/>
    <property type="project" value="UniProtKB-UniRule"/>
</dbReference>
<dbReference type="GO" id="GO:0006235">
    <property type="term" value="P:dTTP biosynthetic process"/>
    <property type="evidence" value="ECO:0007669"/>
    <property type="project" value="UniProtKB-UniRule"/>
</dbReference>
<dbReference type="GO" id="GO:0032259">
    <property type="term" value="P:methylation"/>
    <property type="evidence" value="ECO:0007669"/>
    <property type="project" value="UniProtKB-KW"/>
</dbReference>
<dbReference type="CDD" id="cd20175">
    <property type="entry name" value="ThyX"/>
    <property type="match status" value="1"/>
</dbReference>
<dbReference type="Gene3D" id="3.30.1360.170">
    <property type="match status" value="1"/>
</dbReference>
<dbReference type="HAMAP" id="MF_01408">
    <property type="entry name" value="ThyX"/>
    <property type="match status" value="1"/>
</dbReference>
<dbReference type="InterPro" id="IPR003669">
    <property type="entry name" value="Thymidylate_synthase_ThyX"/>
</dbReference>
<dbReference type="InterPro" id="IPR036098">
    <property type="entry name" value="Thymidylate_synthase_ThyX_sf"/>
</dbReference>
<dbReference type="NCBIfam" id="TIGR02170">
    <property type="entry name" value="thyX"/>
    <property type="match status" value="1"/>
</dbReference>
<dbReference type="PANTHER" id="PTHR34934">
    <property type="entry name" value="FLAVIN-DEPENDENT THYMIDYLATE SYNTHASE"/>
    <property type="match status" value="1"/>
</dbReference>
<dbReference type="PANTHER" id="PTHR34934:SF1">
    <property type="entry name" value="FLAVIN-DEPENDENT THYMIDYLATE SYNTHASE"/>
    <property type="match status" value="1"/>
</dbReference>
<dbReference type="Pfam" id="PF02511">
    <property type="entry name" value="Thy1"/>
    <property type="match status" value="1"/>
</dbReference>
<dbReference type="SUPFAM" id="SSF69796">
    <property type="entry name" value="Thymidylate synthase-complementing protein Thy1"/>
    <property type="match status" value="1"/>
</dbReference>
<dbReference type="PROSITE" id="PS51331">
    <property type="entry name" value="THYX"/>
    <property type="match status" value="1"/>
</dbReference>
<organism>
    <name type="scientific">Ehrlichia ruminantium (strain Welgevonden)</name>
    <dbReference type="NCBI Taxonomy" id="254945"/>
    <lineage>
        <taxon>Bacteria</taxon>
        <taxon>Pseudomonadati</taxon>
        <taxon>Pseudomonadota</taxon>
        <taxon>Alphaproteobacteria</taxon>
        <taxon>Rickettsiales</taxon>
        <taxon>Anaplasmataceae</taxon>
        <taxon>Ehrlichia</taxon>
    </lineage>
</organism>
<reference key="1">
    <citation type="journal article" date="2005" name="Proc. Natl. Acad. Sci. U.S.A.">
        <title>The genome of the heartwater agent Ehrlichia ruminantium contains multiple tandem repeats of actively variable copy number.</title>
        <authorList>
            <person name="Collins N.E."/>
            <person name="Liebenberg J."/>
            <person name="de Villiers E.P."/>
            <person name="Brayton K.A."/>
            <person name="Louw E."/>
            <person name="Pretorius A."/>
            <person name="Faber F.E."/>
            <person name="van Heerden H."/>
            <person name="Josemans A."/>
            <person name="van Kleef M."/>
            <person name="Steyn H.C."/>
            <person name="van Strijp M.F."/>
            <person name="Zweygarth E."/>
            <person name="Jongejan F."/>
            <person name="Maillard J.C."/>
            <person name="Berthier D."/>
            <person name="Botha M."/>
            <person name="Joubert F."/>
            <person name="Corton C.H."/>
            <person name="Thomson N.R."/>
            <person name="Allsopp M.T."/>
            <person name="Allsopp B.A."/>
        </authorList>
    </citation>
    <scope>NUCLEOTIDE SEQUENCE [LARGE SCALE GENOMIC DNA]</scope>
    <source>
        <strain>Welgevonden</strain>
    </source>
</reference>
<reference key="2">
    <citation type="journal article" date="2006" name="J. Bacteriol.">
        <title>Comparative genomic analysis of three strains of Ehrlichia ruminantium reveals an active process of genome size plasticity.</title>
        <authorList>
            <person name="Frutos R."/>
            <person name="Viari A."/>
            <person name="Ferraz C."/>
            <person name="Morgat A."/>
            <person name="Eychenie S."/>
            <person name="Kandassamy Y."/>
            <person name="Chantal I."/>
            <person name="Bensaid A."/>
            <person name="Coissac E."/>
            <person name="Vachiery N."/>
            <person name="Demaille J."/>
            <person name="Martinez D."/>
        </authorList>
    </citation>
    <scope>NUCLEOTIDE SEQUENCE [LARGE SCALE GENOMIC DNA]</scope>
    <source>
        <strain>Welgevonden</strain>
    </source>
</reference>
<name>THYX_EHRRW</name>
<accession>Q5HAK2</accession>
<accession>Q5FDF4</accession>
<sequence length="298" mass="34876">MLVLSIRIKVWQTMESEITKRIVVPELEDILYKEHKVLDKGFVRLVDYMGSDESVVQAARISYGRGTKSVSQDAALINYLMRHSHTTPFEMCEIKFHIKLPIFVARQWVRHRTANVNEYSARYSVLDHEFYIPELDHVATQSEDNAQGRGNSLSNEDAQYVTDLLKRDSDMVYETYNKFLIKGVSREISRISLTLNYYTEWYWKIDLHNLLHFLRLRSDVHAQYEIRVYAETMLEIVKKWVPLTYAAFVEYCLESQSFSKSALSVVKKLIAGEDVAREDTGIGKREWRELMDVLADNK</sequence>
<keyword id="KW-0274">FAD</keyword>
<keyword id="KW-0285">Flavoprotein</keyword>
<keyword id="KW-0489">Methyltransferase</keyword>
<keyword id="KW-0521">NADP</keyword>
<keyword id="KW-0545">Nucleotide biosynthesis</keyword>
<keyword id="KW-0808">Transferase</keyword>